<reference key="1">
    <citation type="journal article" date="2004" name="J. Infect. Dis.">
        <title>Progress toward characterization of the group A Streptococcus metagenome: complete genome sequence of a macrolide-resistant serotype M6 strain.</title>
        <authorList>
            <person name="Banks D.J."/>
            <person name="Porcella S.F."/>
            <person name="Barbian K.D."/>
            <person name="Beres S.B."/>
            <person name="Philips L.E."/>
            <person name="Voyich J.M."/>
            <person name="DeLeo F.R."/>
            <person name="Martin J.M."/>
            <person name="Somerville G.A."/>
            <person name="Musser J.M."/>
        </authorList>
    </citation>
    <scope>NUCLEOTIDE SEQUENCE [LARGE SCALE GENOMIC DNA]</scope>
    <source>
        <strain>ATCC BAA-946 / MGAS10394</strain>
    </source>
</reference>
<organism>
    <name type="scientific">Streptococcus pyogenes serotype M6 (strain ATCC BAA-946 / MGAS10394)</name>
    <dbReference type="NCBI Taxonomy" id="286636"/>
    <lineage>
        <taxon>Bacteria</taxon>
        <taxon>Bacillati</taxon>
        <taxon>Bacillota</taxon>
        <taxon>Bacilli</taxon>
        <taxon>Lactobacillales</taxon>
        <taxon>Streptococcaceae</taxon>
        <taxon>Streptococcus</taxon>
    </lineage>
</organism>
<accession>Q5XCU7</accession>
<dbReference type="EC" id="3.4.11.4" evidence="1"/>
<dbReference type="EMBL" id="CP000003">
    <property type="protein sequence ID" value="AAT86766.1"/>
    <property type="status" value="ALT_INIT"/>
    <property type="molecule type" value="Genomic_DNA"/>
</dbReference>
<dbReference type="RefSeq" id="WP_021340085.1">
    <property type="nucleotide sequence ID" value="NC_006086.1"/>
</dbReference>
<dbReference type="SMR" id="Q5XCU7"/>
<dbReference type="MEROPS" id="M20.003"/>
<dbReference type="KEGG" id="spa:M6_Spy0631"/>
<dbReference type="HOGENOM" id="CLU_053676_0_0_9"/>
<dbReference type="Proteomes" id="UP000001167">
    <property type="component" value="Chromosome"/>
</dbReference>
<dbReference type="GO" id="GO:0005829">
    <property type="term" value="C:cytosol"/>
    <property type="evidence" value="ECO:0007669"/>
    <property type="project" value="TreeGrafter"/>
</dbReference>
<dbReference type="GO" id="GO:0008237">
    <property type="term" value="F:metallopeptidase activity"/>
    <property type="evidence" value="ECO:0007669"/>
    <property type="project" value="UniProtKB-KW"/>
</dbReference>
<dbReference type="GO" id="GO:0045148">
    <property type="term" value="F:tripeptide aminopeptidase activity"/>
    <property type="evidence" value="ECO:0007669"/>
    <property type="project" value="UniProtKB-UniRule"/>
</dbReference>
<dbReference type="GO" id="GO:0008270">
    <property type="term" value="F:zinc ion binding"/>
    <property type="evidence" value="ECO:0007669"/>
    <property type="project" value="UniProtKB-UniRule"/>
</dbReference>
<dbReference type="GO" id="GO:0043171">
    <property type="term" value="P:peptide catabolic process"/>
    <property type="evidence" value="ECO:0007669"/>
    <property type="project" value="UniProtKB-UniRule"/>
</dbReference>
<dbReference type="GO" id="GO:0006508">
    <property type="term" value="P:proteolysis"/>
    <property type="evidence" value="ECO:0007669"/>
    <property type="project" value="UniProtKB-UniRule"/>
</dbReference>
<dbReference type="CDD" id="cd03892">
    <property type="entry name" value="M20_peptT"/>
    <property type="match status" value="1"/>
</dbReference>
<dbReference type="FunFam" id="3.30.70.360:FF:000002">
    <property type="entry name" value="Peptidase T"/>
    <property type="match status" value="1"/>
</dbReference>
<dbReference type="Gene3D" id="3.30.70.360">
    <property type="match status" value="1"/>
</dbReference>
<dbReference type="Gene3D" id="3.40.630.10">
    <property type="entry name" value="Zn peptidases"/>
    <property type="match status" value="1"/>
</dbReference>
<dbReference type="HAMAP" id="MF_00550">
    <property type="entry name" value="Aminopeptidase_M20"/>
    <property type="match status" value="1"/>
</dbReference>
<dbReference type="InterPro" id="IPR001261">
    <property type="entry name" value="ArgE/DapE_CS"/>
</dbReference>
<dbReference type="InterPro" id="IPR036264">
    <property type="entry name" value="Bact_exopeptidase_dim_dom"/>
</dbReference>
<dbReference type="InterPro" id="IPR002933">
    <property type="entry name" value="Peptidase_M20"/>
</dbReference>
<dbReference type="InterPro" id="IPR011650">
    <property type="entry name" value="Peptidase_M20_dimer"/>
</dbReference>
<dbReference type="InterPro" id="IPR010161">
    <property type="entry name" value="Peptidase_M20B"/>
</dbReference>
<dbReference type="NCBIfam" id="TIGR01882">
    <property type="entry name" value="peptidase-T"/>
    <property type="match status" value="1"/>
</dbReference>
<dbReference type="NCBIfam" id="NF003976">
    <property type="entry name" value="PRK05469.1"/>
    <property type="match status" value="1"/>
</dbReference>
<dbReference type="NCBIfam" id="NF009920">
    <property type="entry name" value="PRK13381.1"/>
    <property type="match status" value="1"/>
</dbReference>
<dbReference type="PANTHER" id="PTHR42994">
    <property type="entry name" value="PEPTIDASE T"/>
    <property type="match status" value="1"/>
</dbReference>
<dbReference type="PANTHER" id="PTHR42994:SF1">
    <property type="entry name" value="PEPTIDASE T"/>
    <property type="match status" value="1"/>
</dbReference>
<dbReference type="Pfam" id="PF07687">
    <property type="entry name" value="M20_dimer"/>
    <property type="match status" value="1"/>
</dbReference>
<dbReference type="Pfam" id="PF01546">
    <property type="entry name" value="Peptidase_M20"/>
    <property type="match status" value="1"/>
</dbReference>
<dbReference type="PIRSF" id="PIRSF037215">
    <property type="entry name" value="Peptidase_M20B"/>
    <property type="match status" value="1"/>
</dbReference>
<dbReference type="SUPFAM" id="SSF55031">
    <property type="entry name" value="Bacterial exopeptidase dimerisation domain"/>
    <property type="match status" value="1"/>
</dbReference>
<dbReference type="SUPFAM" id="SSF53187">
    <property type="entry name" value="Zn-dependent exopeptidases"/>
    <property type="match status" value="1"/>
</dbReference>
<dbReference type="PROSITE" id="PS00758">
    <property type="entry name" value="ARGE_DAPE_CPG2_1"/>
    <property type="match status" value="1"/>
</dbReference>
<dbReference type="PROSITE" id="PS00759">
    <property type="entry name" value="ARGE_DAPE_CPG2_2"/>
    <property type="match status" value="1"/>
</dbReference>
<sequence length="407" mass="45100">MKYDNLLDRFIKYVKVNTRSDPDSETTPSTESQEAFALTILKPEMEAIGLQDVHYNPVNGYLIGTLPANNPTLTRKIGFIAHMDTADFNAENVNPQIIDNYQGEDITLGSSNYKLDPKAFPNLNNYIGQTLITTDGTTLLGADDKSGIAEIMTAIEFLTSQPQIEHCDIKVAFGPDEEIGVGADKFEVADFEVDFAYTMDGGPLGELQYETFSAAALEVTFLGRNVHPGTAKDQMINALQLAIDFHEKLPAKERPEYTDGYQGFYHLTGLTGTVEEARASYIIRDFEEASFEARKVKVENIAQSMNAQLGTKRVLVELNDQYYNMKKVIEKDMTAIELAKEVMEELTIKPVIEPIRGGTDGSKISFMGIPTPNIFAGGENMHGRFEFVSLQTMERAVDVIIGLVCKA</sequence>
<comment type="function">
    <text evidence="1">Cleaves the N-terminal amino acid of tripeptides.</text>
</comment>
<comment type="catalytic activity">
    <reaction evidence="1">
        <text>Release of the N-terminal residue from a tripeptide.</text>
        <dbReference type="EC" id="3.4.11.4"/>
    </reaction>
</comment>
<comment type="cofactor">
    <cofactor evidence="1">
        <name>Zn(2+)</name>
        <dbReference type="ChEBI" id="CHEBI:29105"/>
    </cofactor>
    <text evidence="1">Binds 2 Zn(2+) ions per subunit.</text>
</comment>
<comment type="subcellular location">
    <subcellularLocation>
        <location evidence="1">Cytoplasm</location>
    </subcellularLocation>
</comment>
<comment type="similarity">
    <text evidence="1">Belongs to the peptidase M20B family.</text>
</comment>
<comment type="sequence caution" evidence="2">
    <conflict type="erroneous initiation">
        <sequence resource="EMBL-CDS" id="AAT86766"/>
    </conflict>
</comment>
<evidence type="ECO:0000255" key="1">
    <source>
        <dbReference type="HAMAP-Rule" id="MF_00550"/>
    </source>
</evidence>
<evidence type="ECO:0000305" key="2"/>
<keyword id="KW-0031">Aminopeptidase</keyword>
<keyword id="KW-0963">Cytoplasm</keyword>
<keyword id="KW-0378">Hydrolase</keyword>
<keyword id="KW-0479">Metal-binding</keyword>
<keyword id="KW-0482">Metalloprotease</keyword>
<keyword id="KW-0645">Protease</keyword>
<keyword id="KW-0862">Zinc</keyword>
<protein>
    <recommendedName>
        <fullName evidence="1">Peptidase T</fullName>
        <ecNumber evidence="1">3.4.11.4</ecNumber>
    </recommendedName>
    <alternativeName>
        <fullName evidence="1">Aminotripeptidase</fullName>
        <shortName evidence="1">Tripeptidase</shortName>
    </alternativeName>
    <alternativeName>
        <fullName evidence="1">Tripeptide aminopeptidase</fullName>
    </alternativeName>
</protein>
<feature type="chain" id="PRO_0000185326" description="Peptidase T">
    <location>
        <begin position="1"/>
        <end position="407"/>
    </location>
</feature>
<feature type="active site" evidence="1">
    <location>
        <position position="84"/>
    </location>
</feature>
<feature type="active site" description="Proton acceptor" evidence="1">
    <location>
        <position position="177"/>
    </location>
</feature>
<feature type="binding site" evidence="1">
    <location>
        <position position="82"/>
    </location>
    <ligand>
        <name>Zn(2+)</name>
        <dbReference type="ChEBI" id="CHEBI:29105"/>
        <label>1</label>
    </ligand>
</feature>
<feature type="binding site" evidence="1">
    <location>
        <position position="143"/>
    </location>
    <ligand>
        <name>Zn(2+)</name>
        <dbReference type="ChEBI" id="CHEBI:29105"/>
        <label>1</label>
    </ligand>
</feature>
<feature type="binding site" evidence="1">
    <location>
        <position position="143"/>
    </location>
    <ligand>
        <name>Zn(2+)</name>
        <dbReference type="ChEBI" id="CHEBI:29105"/>
        <label>2</label>
    </ligand>
</feature>
<feature type="binding site" evidence="1">
    <location>
        <position position="178"/>
    </location>
    <ligand>
        <name>Zn(2+)</name>
        <dbReference type="ChEBI" id="CHEBI:29105"/>
        <label>2</label>
    </ligand>
</feature>
<feature type="binding site" evidence="1">
    <location>
        <position position="200"/>
    </location>
    <ligand>
        <name>Zn(2+)</name>
        <dbReference type="ChEBI" id="CHEBI:29105"/>
        <label>1</label>
    </ligand>
</feature>
<feature type="binding site" evidence="1">
    <location>
        <position position="382"/>
    </location>
    <ligand>
        <name>Zn(2+)</name>
        <dbReference type="ChEBI" id="CHEBI:29105"/>
        <label>2</label>
    </ligand>
</feature>
<proteinExistence type="inferred from homology"/>
<name>PEPT_STRP6</name>
<gene>
    <name evidence="1" type="primary">pepT</name>
    <name type="ordered locus">M6_Spy0631</name>
</gene>